<sequence length="151" mass="16135">MLKGFKEFLSRGNIVDLAVAVVIGTAFTALVTRFTDSIITPLINRVGVNEQSDLGILKIGIGRGQSIDLNVLLSATINFILVAGVVYFLVVVPYNTLRKKGEVEQADDAQIVLLTEIRDLLAQTNSNSSGRHEAPGTAGTPPPNYGPRADT</sequence>
<proteinExistence type="inferred from homology"/>
<gene>
    <name evidence="1" type="primary">mscL</name>
    <name type="ordered locus">MMAR_4525</name>
</gene>
<feature type="chain" id="PRO_1000094908" description="Large-conductance mechanosensitive channel">
    <location>
        <begin position="1"/>
        <end position="151"/>
    </location>
</feature>
<feature type="transmembrane region" description="Helical" evidence="1">
    <location>
        <begin position="12"/>
        <end position="32"/>
    </location>
</feature>
<feature type="transmembrane region" description="Helical" evidence="1">
    <location>
        <begin position="71"/>
        <end position="91"/>
    </location>
</feature>
<feature type="region of interest" description="Disordered" evidence="2">
    <location>
        <begin position="125"/>
        <end position="151"/>
    </location>
</feature>
<reference key="1">
    <citation type="journal article" date="2008" name="Genome Res.">
        <title>Insights from the complete genome sequence of Mycobacterium marinum on the evolution of Mycobacterium tuberculosis.</title>
        <authorList>
            <person name="Stinear T.P."/>
            <person name="Seemann T."/>
            <person name="Harrison P.F."/>
            <person name="Jenkin G.A."/>
            <person name="Davies J.K."/>
            <person name="Johnson P.D."/>
            <person name="Abdellah Z."/>
            <person name="Arrowsmith C."/>
            <person name="Chillingworth T."/>
            <person name="Churcher C."/>
            <person name="Clarke K."/>
            <person name="Cronin A."/>
            <person name="Davis P."/>
            <person name="Goodhead I."/>
            <person name="Holroyd N."/>
            <person name="Jagels K."/>
            <person name="Lord A."/>
            <person name="Moule S."/>
            <person name="Mungall K."/>
            <person name="Norbertczak H."/>
            <person name="Quail M.A."/>
            <person name="Rabbinowitsch E."/>
            <person name="Walker D."/>
            <person name="White B."/>
            <person name="Whitehead S."/>
            <person name="Small P.L."/>
            <person name="Brosch R."/>
            <person name="Ramakrishnan L."/>
            <person name="Fischbach M.A."/>
            <person name="Parkhill J."/>
            <person name="Cole S.T."/>
        </authorList>
    </citation>
    <scope>NUCLEOTIDE SEQUENCE [LARGE SCALE GENOMIC DNA]</scope>
    <source>
        <strain>ATCC BAA-535 / M</strain>
    </source>
</reference>
<name>MSCL_MYCMM</name>
<evidence type="ECO:0000255" key="1">
    <source>
        <dbReference type="HAMAP-Rule" id="MF_00115"/>
    </source>
</evidence>
<evidence type="ECO:0000256" key="2">
    <source>
        <dbReference type="SAM" id="MobiDB-lite"/>
    </source>
</evidence>
<keyword id="KW-0997">Cell inner membrane</keyword>
<keyword id="KW-1003">Cell membrane</keyword>
<keyword id="KW-0407">Ion channel</keyword>
<keyword id="KW-0406">Ion transport</keyword>
<keyword id="KW-0472">Membrane</keyword>
<keyword id="KW-1185">Reference proteome</keyword>
<keyword id="KW-0812">Transmembrane</keyword>
<keyword id="KW-1133">Transmembrane helix</keyword>
<keyword id="KW-0813">Transport</keyword>
<dbReference type="EMBL" id="CP000854">
    <property type="protein sequence ID" value="ACC42931.1"/>
    <property type="molecule type" value="Genomic_DNA"/>
</dbReference>
<dbReference type="RefSeq" id="WP_011742224.1">
    <property type="nucleotide sequence ID" value="NC_010612.1"/>
</dbReference>
<dbReference type="SMR" id="B2HEA6"/>
<dbReference type="STRING" id="216594.MMAR_4525"/>
<dbReference type="GeneID" id="34340813"/>
<dbReference type="KEGG" id="mmi:MMAR_4525"/>
<dbReference type="eggNOG" id="COG1970">
    <property type="taxonomic scope" value="Bacteria"/>
</dbReference>
<dbReference type="HOGENOM" id="CLU_095787_1_1_11"/>
<dbReference type="OrthoDB" id="9810350at2"/>
<dbReference type="Proteomes" id="UP000001190">
    <property type="component" value="Chromosome"/>
</dbReference>
<dbReference type="GO" id="GO:0005886">
    <property type="term" value="C:plasma membrane"/>
    <property type="evidence" value="ECO:0007669"/>
    <property type="project" value="UniProtKB-SubCell"/>
</dbReference>
<dbReference type="GO" id="GO:0008381">
    <property type="term" value="F:mechanosensitive monoatomic ion channel activity"/>
    <property type="evidence" value="ECO:0007669"/>
    <property type="project" value="UniProtKB-UniRule"/>
</dbReference>
<dbReference type="Gene3D" id="1.20.5.220">
    <property type="match status" value="1"/>
</dbReference>
<dbReference type="Gene3D" id="1.10.1200.120">
    <property type="entry name" value="Large-conductance mechanosensitive channel, MscL, domain 1"/>
    <property type="match status" value="1"/>
</dbReference>
<dbReference type="HAMAP" id="MF_00115">
    <property type="entry name" value="MscL"/>
    <property type="match status" value="1"/>
</dbReference>
<dbReference type="InterPro" id="IPR019823">
    <property type="entry name" value="Mechanosensitive_channel_CS"/>
</dbReference>
<dbReference type="InterPro" id="IPR001185">
    <property type="entry name" value="MS_channel"/>
</dbReference>
<dbReference type="InterPro" id="IPR037673">
    <property type="entry name" value="MSC/AndL"/>
</dbReference>
<dbReference type="InterPro" id="IPR036019">
    <property type="entry name" value="MscL_channel"/>
</dbReference>
<dbReference type="NCBIfam" id="TIGR00220">
    <property type="entry name" value="mscL"/>
    <property type="match status" value="1"/>
</dbReference>
<dbReference type="NCBIfam" id="NF001842">
    <property type="entry name" value="PRK00567.1-3"/>
    <property type="match status" value="1"/>
</dbReference>
<dbReference type="PANTHER" id="PTHR30266:SF2">
    <property type="entry name" value="LARGE-CONDUCTANCE MECHANOSENSITIVE CHANNEL"/>
    <property type="match status" value="1"/>
</dbReference>
<dbReference type="PANTHER" id="PTHR30266">
    <property type="entry name" value="MECHANOSENSITIVE CHANNEL MSCL"/>
    <property type="match status" value="1"/>
</dbReference>
<dbReference type="Pfam" id="PF01741">
    <property type="entry name" value="MscL"/>
    <property type="match status" value="1"/>
</dbReference>
<dbReference type="PRINTS" id="PR01264">
    <property type="entry name" value="MECHCHANNEL"/>
</dbReference>
<dbReference type="SUPFAM" id="SSF81330">
    <property type="entry name" value="Gated mechanosensitive channel"/>
    <property type="match status" value="1"/>
</dbReference>
<dbReference type="PROSITE" id="PS01327">
    <property type="entry name" value="MSCL"/>
    <property type="match status" value="1"/>
</dbReference>
<protein>
    <recommendedName>
        <fullName evidence="1">Large-conductance mechanosensitive channel</fullName>
    </recommendedName>
</protein>
<organism>
    <name type="scientific">Mycobacterium marinum (strain ATCC BAA-535 / M)</name>
    <dbReference type="NCBI Taxonomy" id="216594"/>
    <lineage>
        <taxon>Bacteria</taxon>
        <taxon>Bacillati</taxon>
        <taxon>Actinomycetota</taxon>
        <taxon>Actinomycetes</taxon>
        <taxon>Mycobacteriales</taxon>
        <taxon>Mycobacteriaceae</taxon>
        <taxon>Mycobacterium</taxon>
        <taxon>Mycobacterium ulcerans group</taxon>
    </lineage>
</organism>
<accession>B2HEA6</accession>
<comment type="function">
    <text evidence="1">Channel that opens in response to stretch forces in the membrane lipid bilayer. May participate in the regulation of osmotic pressure changes within the cell.</text>
</comment>
<comment type="subunit">
    <text evidence="1">Homopentamer.</text>
</comment>
<comment type="subcellular location">
    <subcellularLocation>
        <location evidence="1">Cell inner membrane</location>
        <topology evidence="1">Multi-pass membrane protein</topology>
    </subcellularLocation>
</comment>
<comment type="similarity">
    <text evidence="1">Belongs to the MscL family.</text>
</comment>